<dbReference type="EMBL" id="AJ505025">
    <property type="protein sequence ID" value="CAD43604.1"/>
    <property type="molecule type" value="mRNA"/>
</dbReference>
<dbReference type="EMBL" id="AJ505026">
    <property type="protein sequence ID" value="CAD43605.1"/>
    <property type="molecule type" value="mRNA"/>
</dbReference>
<dbReference type="EMBL" id="AL159990">
    <property type="status" value="NOT_ANNOTATED_CDS"/>
    <property type="molecule type" value="Genomic_DNA"/>
</dbReference>
<dbReference type="EMBL" id="AL161913">
    <property type="status" value="NOT_ANNOTATED_CDS"/>
    <property type="molecule type" value="Genomic_DNA"/>
</dbReference>
<dbReference type="EMBL" id="AL356318">
    <property type="status" value="NOT_ANNOTATED_CDS"/>
    <property type="molecule type" value="Genomic_DNA"/>
</dbReference>
<dbReference type="EMBL" id="AL358786">
    <property type="status" value="NOT_ANNOTATED_CDS"/>
    <property type="molecule type" value="Genomic_DNA"/>
</dbReference>
<dbReference type="EMBL" id="AL442645">
    <property type="status" value="NOT_ANNOTATED_CDS"/>
    <property type="molecule type" value="Genomic_DNA"/>
</dbReference>
<dbReference type="EMBL" id="AL160273">
    <property type="status" value="NOT_ANNOTATED_CDS"/>
    <property type="molecule type" value="Genomic_DNA"/>
</dbReference>
<dbReference type="EMBL" id="AL391819">
    <property type="status" value="NOT_ANNOTATED_CDS"/>
    <property type="molecule type" value="Genomic_DNA"/>
</dbReference>
<dbReference type="EMBL" id="AL592438">
    <property type="status" value="NOT_ANNOTATED_CDS"/>
    <property type="molecule type" value="Genomic_DNA"/>
</dbReference>
<dbReference type="EMBL" id="BC121821">
    <property type="protein sequence ID" value="AAI21822.2"/>
    <property type="molecule type" value="mRNA"/>
</dbReference>
<dbReference type="EMBL" id="BC134414">
    <property type="protein sequence ID" value="AAI34415.1"/>
    <property type="molecule type" value="mRNA"/>
</dbReference>
<dbReference type="EMBL" id="BC142972">
    <property type="protein sequence ID" value="AAI42973.1"/>
    <property type="molecule type" value="mRNA"/>
</dbReference>
<dbReference type="EMBL" id="AL136545">
    <property type="protein sequence ID" value="CAB66480.2"/>
    <property type="status" value="ALT_SEQ"/>
    <property type="molecule type" value="mRNA"/>
</dbReference>
<dbReference type="EMBL" id="AF536748">
    <property type="protein sequence ID" value="AAO49153.1"/>
    <property type="molecule type" value="mRNA"/>
</dbReference>
<dbReference type="EMBL" id="AF536749">
    <property type="protein sequence ID" value="AAO49154.1"/>
    <property type="molecule type" value="mRNA"/>
</dbReference>
<dbReference type="EMBL" id="AF536750">
    <property type="protein sequence ID" value="AAO49155.1"/>
    <property type="molecule type" value="mRNA"/>
</dbReference>
<dbReference type="EMBL" id="AF536751">
    <property type="protein sequence ID" value="AAO49156.1"/>
    <property type="molecule type" value="mRNA"/>
</dbReference>
<dbReference type="EMBL" id="AF536752">
    <property type="protein sequence ID" value="AAO49157.1"/>
    <property type="molecule type" value="mRNA"/>
</dbReference>
<dbReference type="EMBL" id="AF536753">
    <property type="protein sequence ID" value="AAO49158.1"/>
    <property type="molecule type" value="mRNA"/>
</dbReference>
<dbReference type="EMBL" id="AB099661">
    <property type="protein sequence ID" value="BAC55102.1"/>
    <property type="molecule type" value="mRNA"/>
</dbReference>
<dbReference type="EMBL" id="AB099662">
    <property type="protein sequence ID" value="BAC55103.1"/>
    <property type="molecule type" value="mRNA"/>
</dbReference>
<dbReference type="EMBL" id="AB099663">
    <property type="protein sequence ID" value="BAC55104.1"/>
    <property type="molecule type" value="mRNA"/>
</dbReference>
<dbReference type="EMBL" id="AB099664">
    <property type="protein sequence ID" value="BAC55105.1"/>
    <property type="molecule type" value="mRNA"/>
</dbReference>
<dbReference type="EMBL" id="AB099665">
    <property type="protein sequence ID" value="BAC55106.1"/>
    <property type="molecule type" value="mRNA"/>
</dbReference>
<dbReference type="EMBL" id="AB046836">
    <property type="protein sequence ID" value="BAB13442.1"/>
    <property type="molecule type" value="mRNA"/>
</dbReference>
<dbReference type="CCDS" id="CCDS43835.1">
    <molecule id="Q9HCF6-2"/>
</dbReference>
<dbReference type="CCDS" id="CCDS6637.1">
    <molecule id="Q9HCF6-12"/>
</dbReference>
<dbReference type="CCDS" id="CCDS94419.1">
    <molecule id="Q9HCF6-10"/>
</dbReference>
<dbReference type="CCDS" id="CCDS94420.1">
    <molecule id="Q9HCF6-3"/>
</dbReference>
<dbReference type="RefSeq" id="NP_001007472.2">
    <molecule id="Q9HCF6-2"/>
    <property type="nucleotide sequence ID" value="NM_001007471.4"/>
</dbReference>
<dbReference type="RefSeq" id="NP_001353074.1">
    <molecule id="Q9HCF6-3"/>
    <property type="nucleotide sequence ID" value="NM_001366145.2"/>
</dbReference>
<dbReference type="RefSeq" id="NP_001353078.1">
    <molecule id="Q9HCF6-5"/>
    <property type="nucleotide sequence ID" value="NM_001366149.2"/>
</dbReference>
<dbReference type="RefSeq" id="NP_001353080.1">
    <molecule id="Q9HCF6-10"/>
    <property type="nucleotide sequence ID" value="NM_001366151.2"/>
</dbReference>
<dbReference type="RefSeq" id="NP_996831.1">
    <molecule id="Q9HCF6-12"/>
    <property type="nucleotide sequence ID" value="NM_206948.4"/>
</dbReference>
<dbReference type="RefSeq" id="XP_011517340.1">
    <property type="nucleotide sequence ID" value="XM_011519038.2"/>
</dbReference>
<dbReference type="RefSeq" id="XP_011517341.1">
    <property type="nucleotide sequence ID" value="XM_011519039.2"/>
</dbReference>
<dbReference type="RefSeq" id="XP_011517343.1">
    <property type="nucleotide sequence ID" value="XM_011519041.2"/>
</dbReference>
<dbReference type="RefSeq" id="XP_011517346.1">
    <property type="nucleotide sequence ID" value="XM_011519044.2"/>
</dbReference>
<dbReference type="RefSeq" id="XP_011517348.1">
    <property type="nucleotide sequence ID" value="XM_011519046.2"/>
</dbReference>
<dbReference type="RefSeq" id="XP_011517349.1">
    <property type="nucleotide sequence ID" value="XM_011519047.2"/>
</dbReference>
<dbReference type="RefSeq" id="XP_016870631.1">
    <property type="nucleotide sequence ID" value="XM_017015142.1"/>
</dbReference>
<dbReference type="SMR" id="Q9HCF6"/>
<dbReference type="BioGRID" id="123085">
    <property type="interactions" value="28"/>
</dbReference>
<dbReference type="FunCoup" id="Q9HCF6">
    <property type="interactions" value="1212"/>
</dbReference>
<dbReference type="IntAct" id="Q9HCF6">
    <property type="interactions" value="17"/>
</dbReference>
<dbReference type="STRING" id="9606.ENSP00000366314"/>
<dbReference type="ChEMBL" id="CHEMBL3559708"/>
<dbReference type="DrugBank" id="DB00794">
    <property type="generic name" value="Primidone"/>
</dbReference>
<dbReference type="DrugCentral" id="Q9HCF6"/>
<dbReference type="GuidetoPHARMACOLOGY" id="495"/>
<dbReference type="TCDB" id="1.A.4.5.6">
    <property type="family name" value="the transient receptor potential ca2+/cation channel (trp-cc) family"/>
</dbReference>
<dbReference type="GlyGen" id="Q9HCF6">
    <property type="glycosylation" value="2 sites, 1 N-linked glycan (1 site), 1 O-linked glycan (1 site)"/>
</dbReference>
<dbReference type="iPTMnet" id="Q9HCF6"/>
<dbReference type="PhosphoSitePlus" id="Q9HCF6"/>
<dbReference type="BioMuta" id="TRPM3"/>
<dbReference type="DMDM" id="322510140"/>
<dbReference type="jPOST" id="Q9HCF6"/>
<dbReference type="MassIVE" id="Q9HCF6"/>
<dbReference type="PaxDb" id="9606-ENSP00000366314"/>
<dbReference type="PeptideAtlas" id="Q9HCF6"/>
<dbReference type="ProteomicsDB" id="81697">
    <molecule id="Q9HCF6-1"/>
</dbReference>
<dbReference type="ProteomicsDB" id="81698">
    <molecule id="Q9HCF6-10"/>
</dbReference>
<dbReference type="ProteomicsDB" id="81699">
    <molecule id="Q9HCF6-11"/>
</dbReference>
<dbReference type="ProteomicsDB" id="81701">
    <molecule id="Q9HCF6-2"/>
</dbReference>
<dbReference type="ProteomicsDB" id="81702">
    <molecule id="Q9HCF6-3"/>
</dbReference>
<dbReference type="ProteomicsDB" id="81703">
    <molecule id="Q9HCF6-4"/>
</dbReference>
<dbReference type="ProteomicsDB" id="81704">
    <molecule id="Q9HCF6-5"/>
</dbReference>
<dbReference type="ProteomicsDB" id="81705">
    <molecule id="Q9HCF6-6"/>
</dbReference>
<dbReference type="ProteomicsDB" id="81706">
    <molecule id="Q9HCF6-7"/>
</dbReference>
<dbReference type="ProteomicsDB" id="81707">
    <molecule id="Q9HCF6-8"/>
</dbReference>
<dbReference type="Antibodypedia" id="12418">
    <property type="antibodies" value="170 antibodies from 21 providers"/>
</dbReference>
<dbReference type="DNASU" id="80036"/>
<dbReference type="Ensembl" id="ENST00000361823.9">
    <molecule id="Q9HCF6-12"/>
    <property type="protein sequence ID" value="ENSP00000355395.4"/>
    <property type="gene ID" value="ENSG00000083067.27"/>
</dbReference>
<dbReference type="Ensembl" id="ENST00000377110.9">
    <molecule id="Q9HCF6-2"/>
    <property type="protein sequence ID" value="ENSP00000366314.4"/>
    <property type="gene ID" value="ENSG00000083067.27"/>
</dbReference>
<dbReference type="Ensembl" id="ENST00000377111.8">
    <molecule id="Q9HCF6-10"/>
    <property type="protein sequence ID" value="ENSP00000366315.4"/>
    <property type="gene ID" value="ENSG00000083067.27"/>
</dbReference>
<dbReference type="Ensembl" id="ENST00000677713.2">
    <molecule id="Q9HCF6-3"/>
    <property type="protein sequence ID" value="ENSP00000503830.2"/>
    <property type="gene ID" value="ENSG00000083067.27"/>
</dbReference>
<dbReference type="GeneID" id="80036"/>
<dbReference type="KEGG" id="hsa:80036"/>
<dbReference type="MANE-Select" id="ENST00000677713.2">
    <molecule id="Q9HCF6-3"/>
    <property type="protein sequence ID" value="ENSP00000503830.2"/>
    <property type="RefSeq nucleotide sequence ID" value="NM_001366145.2"/>
    <property type="RefSeq protein sequence ID" value="NP_001353074.1"/>
</dbReference>
<dbReference type="UCSC" id="uc004aic.4">
    <molecule id="Q9HCF6-1"/>
    <property type="organism name" value="human"/>
</dbReference>
<dbReference type="AGR" id="HGNC:17992"/>
<dbReference type="CTD" id="80036"/>
<dbReference type="DisGeNET" id="80036"/>
<dbReference type="GeneCards" id="TRPM3"/>
<dbReference type="GeneReviews" id="TRPM3"/>
<dbReference type="HGNC" id="HGNC:17992">
    <property type="gene designation" value="TRPM3"/>
</dbReference>
<dbReference type="HPA" id="ENSG00000083067">
    <property type="expression patterns" value="Tissue enriched (choroid)"/>
</dbReference>
<dbReference type="MalaCards" id="TRPM3"/>
<dbReference type="MIM" id="608961">
    <property type="type" value="gene"/>
</dbReference>
<dbReference type="MIM" id="620224">
    <property type="type" value="phenotype"/>
</dbReference>
<dbReference type="MIM" id="620253">
    <property type="type" value="phenotype"/>
</dbReference>
<dbReference type="neXtProt" id="NX_Q9HCF6"/>
<dbReference type="OpenTargets" id="ENSG00000083067"/>
<dbReference type="Orphanet" id="178469">
    <property type="disease" value="Autosomal dominant non-syndromic intellectual disability"/>
</dbReference>
<dbReference type="PharmGKB" id="PA38271"/>
<dbReference type="VEuPathDB" id="HostDB:ENSG00000083067"/>
<dbReference type="eggNOG" id="KOG3614">
    <property type="taxonomic scope" value="Eukaryota"/>
</dbReference>
<dbReference type="GeneTree" id="ENSGT00940000157366"/>
<dbReference type="HOGENOM" id="CLU_001390_4_1_1"/>
<dbReference type="InParanoid" id="Q9HCF6"/>
<dbReference type="OMA" id="YAIAYIC"/>
<dbReference type="OrthoDB" id="301415at2759"/>
<dbReference type="PAN-GO" id="Q9HCF6">
    <property type="GO annotations" value="3 GO annotations based on evolutionary models"/>
</dbReference>
<dbReference type="PhylomeDB" id="Q9HCF6"/>
<dbReference type="TreeFam" id="TF314204"/>
<dbReference type="PathwayCommons" id="Q9HCF6"/>
<dbReference type="Reactome" id="R-HSA-3295583">
    <property type="pathway name" value="TRP channels"/>
</dbReference>
<dbReference type="SignaLink" id="Q9HCF6"/>
<dbReference type="BioGRID-ORCS" id="80036">
    <property type="hits" value="6 hits in 1150 CRISPR screens"/>
</dbReference>
<dbReference type="ChiTaRS" id="TRPM3">
    <property type="organism name" value="human"/>
</dbReference>
<dbReference type="GeneWiki" id="TRPM3"/>
<dbReference type="GenomeRNAi" id="80036"/>
<dbReference type="Pharos" id="Q9HCF6">
    <property type="development level" value="Tchem"/>
</dbReference>
<dbReference type="PRO" id="PR:Q9HCF6"/>
<dbReference type="Proteomes" id="UP000005640">
    <property type="component" value="Chromosome 9"/>
</dbReference>
<dbReference type="RNAct" id="Q9HCF6">
    <property type="molecule type" value="protein"/>
</dbReference>
<dbReference type="Bgee" id="ENSG00000083067">
    <property type="expression patterns" value="Expressed in pigmented layer of retina and 142 other cell types or tissues"/>
</dbReference>
<dbReference type="ExpressionAtlas" id="Q9HCF6">
    <property type="expression patterns" value="baseline and differential"/>
</dbReference>
<dbReference type="GO" id="GO:0005886">
    <property type="term" value="C:plasma membrane"/>
    <property type="evidence" value="ECO:0000314"/>
    <property type="project" value="UniProtKB"/>
</dbReference>
<dbReference type="GO" id="GO:0005262">
    <property type="term" value="F:calcium channel activity"/>
    <property type="evidence" value="ECO:0000314"/>
    <property type="project" value="UniProtKB"/>
</dbReference>
<dbReference type="GO" id="GO:0005516">
    <property type="term" value="F:calmodulin binding"/>
    <property type="evidence" value="ECO:0007669"/>
    <property type="project" value="UniProtKB-KW"/>
</dbReference>
<dbReference type="GO" id="GO:0031683">
    <property type="term" value="F:G-protein beta/gamma-subunit complex binding"/>
    <property type="evidence" value="ECO:0000250"/>
    <property type="project" value="UniProtKB"/>
</dbReference>
<dbReference type="GO" id="GO:0005261">
    <property type="term" value="F:monoatomic cation channel activity"/>
    <property type="evidence" value="ECO:0000314"/>
    <property type="project" value="MGI"/>
</dbReference>
<dbReference type="GO" id="GO:0005546">
    <property type="term" value="F:phosphatidylinositol-4,5-bisphosphate binding"/>
    <property type="evidence" value="ECO:0000250"/>
    <property type="project" value="UniProtKB"/>
</dbReference>
<dbReference type="GO" id="GO:0070588">
    <property type="term" value="P:calcium ion transmembrane transport"/>
    <property type="evidence" value="ECO:0000314"/>
    <property type="project" value="UniProtKB"/>
</dbReference>
<dbReference type="GO" id="GO:0030001">
    <property type="term" value="P:metal ion transport"/>
    <property type="evidence" value="ECO:0000318"/>
    <property type="project" value="GO_Central"/>
</dbReference>
<dbReference type="GO" id="GO:0098655">
    <property type="term" value="P:monoatomic cation transmembrane transport"/>
    <property type="evidence" value="ECO:0000318"/>
    <property type="project" value="GO_Central"/>
</dbReference>
<dbReference type="GO" id="GO:0006812">
    <property type="term" value="P:monoatomic cation transport"/>
    <property type="evidence" value="ECO:0000314"/>
    <property type="project" value="MGI"/>
</dbReference>
<dbReference type="GO" id="GO:0051289">
    <property type="term" value="P:protein homotetramerization"/>
    <property type="evidence" value="ECO:0000250"/>
    <property type="project" value="UniProtKB"/>
</dbReference>
<dbReference type="GO" id="GO:0071577">
    <property type="term" value="P:zinc ion transmembrane transport"/>
    <property type="evidence" value="ECO:0000250"/>
    <property type="project" value="UniProtKB"/>
</dbReference>
<dbReference type="FunFam" id="1.20.5.1010:FF:000001">
    <property type="entry name" value="Transient receptor potential cation channel subfamily M member 3"/>
    <property type="match status" value="1"/>
</dbReference>
<dbReference type="Gene3D" id="1.20.5.1010">
    <property type="entry name" value="TRPM, tetramerisation domain"/>
    <property type="match status" value="1"/>
</dbReference>
<dbReference type="InterPro" id="IPR005821">
    <property type="entry name" value="Ion_trans_dom"/>
</dbReference>
<dbReference type="InterPro" id="IPR050927">
    <property type="entry name" value="TRPM"/>
</dbReference>
<dbReference type="InterPro" id="IPR041491">
    <property type="entry name" value="TRPM_SLOG"/>
</dbReference>
<dbReference type="InterPro" id="IPR032415">
    <property type="entry name" value="TRPM_tetra"/>
</dbReference>
<dbReference type="InterPro" id="IPR037162">
    <property type="entry name" value="TRPM_tetra_sf"/>
</dbReference>
<dbReference type="PANTHER" id="PTHR13800:SF7">
    <property type="entry name" value="TRANSIENT RECEPTOR POTENTIAL CATION CHANNEL SUBFAMILY M MEMBER 3"/>
    <property type="match status" value="1"/>
</dbReference>
<dbReference type="PANTHER" id="PTHR13800">
    <property type="entry name" value="TRANSIENT RECEPTOR POTENTIAL CATION CHANNEL, SUBFAMILY M, MEMBER 6"/>
    <property type="match status" value="1"/>
</dbReference>
<dbReference type="Pfam" id="PF00520">
    <property type="entry name" value="Ion_trans"/>
    <property type="match status" value="1"/>
</dbReference>
<dbReference type="Pfam" id="PF18139">
    <property type="entry name" value="LSDAT_euk"/>
    <property type="match status" value="1"/>
</dbReference>
<dbReference type="Pfam" id="PF25508">
    <property type="entry name" value="TRPM2"/>
    <property type="match status" value="1"/>
</dbReference>
<dbReference type="Pfam" id="PF16519">
    <property type="entry name" value="TRPM_tetra"/>
    <property type="match status" value="1"/>
</dbReference>
<proteinExistence type="evidence at protein level"/>
<protein>
    <recommendedName>
        <fullName>Transient receptor potential cation channel subfamily M member 3</fullName>
    </recommendedName>
    <alternativeName>
        <fullName>Long transient receptor potential channel 3</fullName>
        <shortName>LTrpC-3</shortName>
        <shortName>LTrpC3</shortName>
    </alternativeName>
    <alternativeName>
        <fullName>Melastatin-2</fullName>
        <shortName>MLSN2</shortName>
    </alternativeName>
</protein>
<accession>Q9HCF6</accession>
<accession>A2A3F6</accession>
<accession>A9Z1Y7</accession>
<accession>Q5VW02</accession>
<accession>Q5VW03</accession>
<accession>Q5VW04</accession>
<accession>Q5W5T7</accession>
<accession>Q86SH0</accession>
<accession>Q86SH6</accession>
<accession>Q86UL0</accession>
<accession>Q86WK1</accession>
<accession>Q86WK2</accession>
<accession>Q86WK3</accession>
<accession>Q86WK4</accession>
<accession>Q86YZ9</accession>
<accession>Q86Z00</accession>
<accession>Q86Z01</accession>
<accession>Q9H0X2</accession>
<evidence type="ECO:0000250" key="1">
    <source>
        <dbReference type="UniProtKB" id="J9SQF3"/>
    </source>
</evidence>
<evidence type="ECO:0000255" key="2"/>
<evidence type="ECO:0000256" key="3">
    <source>
        <dbReference type="SAM" id="MobiDB-lite"/>
    </source>
</evidence>
<evidence type="ECO:0000269" key="4">
    <source>
    </source>
</evidence>
<evidence type="ECO:0000269" key="5">
    <source>
    </source>
</evidence>
<evidence type="ECO:0000269" key="6">
    <source>
    </source>
</evidence>
<evidence type="ECO:0000269" key="7">
    <source>
    </source>
</evidence>
<evidence type="ECO:0000269" key="8">
    <source>
    </source>
</evidence>
<evidence type="ECO:0000269" key="9">
    <source>
    </source>
</evidence>
<evidence type="ECO:0000269" key="10">
    <source>
    </source>
</evidence>
<evidence type="ECO:0000269" key="11">
    <source>
    </source>
</evidence>
<evidence type="ECO:0000269" key="12">
    <source>
    </source>
</evidence>
<evidence type="ECO:0000269" key="13">
    <source>
    </source>
</evidence>
<evidence type="ECO:0000269" key="14">
    <source>
    </source>
</evidence>
<evidence type="ECO:0000269" key="15">
    <source>
    </source>
</evidence>
<evidence type="ECO:0000269" key="16">
    <source>
    </source>
</evidence>
<evidence type="ECO:0000269" key="17">
    <source>
    </source>
</evidence>
<evidence type="ECO:0000269" key="18">
    <source>
    </source>
</evidence>
<evidence type="ECO:0000269" key="19">
    <source>
    </source>
</evidence>
<evidence type="ECO:0000269" key="20">
    <source ref="6"/>
</evidence>
<evidence type="ECO:0000303" key="21">
    <source>
    </source>
</evidence>
<evidence type="ECO:0000303" key="22">
    <source>
    </source>
</evidence>
<evidence type="ECO:0000303" key="23">
    <source>
    </source>
</evidence>
<evidence type="ECO:0000303" key="24">
    <source>
    </source>
</evidence>
<evidence type="ECO:0000303" key="25">
    <source ref="6"/>
</evidence>
<evidence type="ECO:0000305" key="26"/>
<evidence type="ECO:0000305" key="27">
    <source>
    </source>
</evidence>
<evidence type="ECO:0000312" key="28">
    <source>
        <dbReference type="HGNC" id="HGNC:17992"/>
    </source>
</evidence>
<sequence length="1732" mass="197571">MPEPWGTVYFLGIAQVFSFLFSWWNLEGVMNQADAPRPLNWTIRKLCHAAFLPSVRLLKAQKSWIERAFYKRECVHIIPSTKDPHRCCCGRLIGQHVGLTPSISVLQNEKNESRLSRNDIQSEKWSISKHTQLSPTDAFGTIEFQGGGHSNKAMYVRVSFDTKPDLLLHLMTKEWQLELPKLLISVHGGLQNFELQPKLKQVFGKGLIKAAMTTGAWIFTGGVNTGVIRHVGDALKDHASKSRGKICTIGIAPWGIVENQEDLIGRDVVRPYQTMSNPMSKLTVLNSMHSHFILADNGTTGKYGAEVKLRRQLEKHISLQKINTRCLPFFSLDSRLFYSFWGSCQLDSVGIGQGVPVVALIVEGGPNVISIVLEYLRDTPPVPVVVCDGSGRASDILAFGHKYSEEGGLINESLRDQLLVTIQKTFTYTRTQAQHLFIILMECMKKKELITVFRMGSEGHQDIDLAILTALLKGANASAPDQLSLALAWNRVDIARSQIFIYGQQWPVGSLEQAMLDALVLDRVDFVKLLIENGVSMHRFLTISRLEELYNTRHGPSNTLYHLVRDVKKGNLPPDYRISLIDIGLVIEYLMGGAYRCNYTRKRFRTLYHNLFGPKRPKALKLLGMEDDIPLRRGRKTTKKREEEVDIDLDDPEINHFPFPFHELMVWAVLMKRQKMALFFWQHGEEAMAKALVACKLCKAMAHEASENDMVDDISQELNHNSRDFGQLAVELLDQSYKQDEQLAMKLLTYELKNWSNATCLQLAVAAKHRDFIAHTCSQMLLTDMWMGRLRMRKNSGLKVILGILLPPSILSLEFKNKDDMPYMSQAQEIHLQEKEAEEPEKPTKEKEEEDMELTAMLGRNNGESSRKKDEEEVQSKHRLIPLGRKIYEFYNAPIVKFWFYTLAYIGYLMLFNYIVLVKMERWPSTQEWIVISYIFTLGIEKMREILMSEPGKLLQKVKVWLQEYWNVTDLIAILLFSVGMILRLQDQPFRSDGRVIYCVNIIYWYIRLLDIFGVNKYLGPYVMMIGKMMIDMMYFVIIMLVVLMSFGVARQAILFPNEEPSWKLAKNIFYMPYWMIYGEVFADQIDPPCGQNETREDGKIIQLPPCKTGAWIVPAIMACYLLVANILLVNLLIAVFNNTFFEVKSISNQVWKFQRYQLIMTFHERPVLPPPLIIFSHMTMIFQHLCCRWRKHESDPDERDYGLKLFITDDELKKVHDFEEQCIEEYFREKDDRFNSSNDERIRVTSERVENMSMRLEEVNEREHSMKASLQTVDIRLAQLEDLIGRMATALERLTGLERAESNKIRSRTSSDCTDAAYIVRQSSFNSQEGNTFKLQESIDPAGEETMSPTSPTLMPRMRSHSFYSVNMKDKGGIEKLESIFKERSLSLHRATSSHSVAKEPKAPAAPANTLAIVPDSRRPSSCIDIYVSAMDELHCDIDPLDNSVNILGLGEPSFSTPVPSTAPSSSAYATLAPTDRPPSRSIDFEDITSMDTRSFSSDYTHLPECQNPWDSEPPMYHTIERSKSSRYLATTPFLLEEAPIVKSHSFMFSPSRSYYANFGVPVKTAEYTSITDCIDTRCVNAPQAIADRAAFPGGLGDKVEDLTCCHPEREAELSHPSSDSEENEAKGRRATIAISSQEGDNSERTLSNNITVPKIERANSYSAEEPSAPYAHTRKSFSISDKLDRQRNTASLRNPFQRSKSSKPEGRGDSLSMRRLSRTSAFQSFESKHN</sequence>
<keyword id="KW-0025">Alternative splicing</keyword>
<keyword id="KW-0106">Calcium</keyword>
<keyword id="KW-0107">Calcium channel</keyword>
<keyword id="KW-0109">Calcium transport</keyword>
<keyword id="KW-0112">Calmodulin-binding</keyword>
<keyword id="KW-0898">Cataract</keyword>
<keyword id="KW-1003">Cell membrane</keyword>
<keyword id="KW-0175">Coiled coil</keyword>
<keyword id="KW-0225">Disease variant</keyword>
<keyword id="KW-0887">Epilepsy</keyword>
<keyword id="KW-0991">Intellectual disability</keyword>
<keyword id="KW-0407">Ion channel</keyword>
<keyword id="KW-0406">Ion transport</keyword>
<keyword id="KW-0472">Membrane</keyword>
<keyword id="KW-1267">Proteomics identification</keyword>
<keyword id="KW-1185">Reference proteome</keyword>
<keyword id="KW-0812">Transmembrane</keyword>
<keyword id="KW-1133">Transmembrane helix</keyword>
<keyword id="KW-0813">Transport</keyword>
<feature type="chain" id="PRO_0000215328" description="Transient receptor potential cation channel subfamily M member 3">
    <location>
        <begin position="1"/>
        <end position="1732"/>
    </location>
</feature>
<feature type="topological domain" description="Cytoplasmic" evidence="26">
    <location>
        <begin position="1"/>
        <end position="894"/>
    </location>
</feature>
<feature type="transmembrane region" description="Helical; Name=1" evidence="1">
    <location>
        <begin position="895"/>
        <end position="918"/>
    </location>
</feature>
<feature type="topological domain" description="Extracellular" evidence="26">
    <location>
        <begin position="919"/>
        <end position="925"/>
    </location>
</feature>
<feature type="transmembrane region" description="Helical; Name=2" evidence="1">
    <location>
        <begin position="926"/>
        <end position="948"/>
    </location>
</feature>
<feature type="topological domain" description="Cytoplasmic" evidence="26">
    <location>
        <begin position="949"/>
        <end position="964"/>
    </location>
</feature>
<feature type="transmembrane region" description="Helical; Name=3" evidence="1">
    <location>
        <begin position="965"/>
        <end position="985"/>
    </location>
</feature>
<feature type="topological domain" description="Extracellular" evidence="26">
    <location>
        <begin position="986"/>
        <end position="989"/>
    </location>
</feature>
<feature type="transmembrane region" description="Helical; Name=4" evidence="1">
    <location>
        <begin position="990"/>
        <end position="1013"/>
    </location>
</feature>
<feature type="topological domain" description="Cytoplasmic" evidence="26">
    <location>
        <begin position="1014"/>
        <end position="1028"/>
    </location>
</feature>
<feature type="transmembrane region" description="Helical; Name=5" evidence="1">
    <location>
        <begin position="1029"/>
        <end position="1056"/>
    </location>
</feature>
<feature type="topological domain" description="Extracellular" evidence="26">
    <location>
        <begin position="1057"/>
        <end position="1111"/>
    </location>
</feature>
<feature type="transmembrane region" description="Helical; Name=6" evidence="1">
    <location>
        <begin position="1112"/>
        <end position="1137"/>
    </location>
</feature>
<feature type="topological domain" description="Cytoplasmic" evidence="26">
    <location>
        <begin position="1138"/>
        <end position="1732"/>
    </location>
</feature>
<feature type="region of interest" description="Calmodulin-binding" evidence="1">
    <location>
        <begin position="192"/>
        <end position="215"/>
    </location>
</feature>
<feature type="region of interest" description="Calmodulin-binding" evidence="1">
    <location>
        <begin position="300"/>
        <end position="323"/>
    </location>
</feature>
<feature type="region of interest" description="Calmodulin-binding" evidence="1">
    <location>
        <begin position="601"/>
        <end position="624"/>
    </location>
</feature>
<feature type="region of interest" description="Required for the inhibitory action of G-beta/gamma-subunits of heterotrimeric G-proteins" evidence="1">
    <location>
        <begin position="617"/>
        <end position="625"/>
    </location>
</feature>
<feature type="region of interest" description="Calmodulin-binding" evidence="1">
    <location>
        <begin position="793"/>
        <end position="816"/>
    </location>
</feature>
<feature type="region of interest" description="Disordered" evidence="3">
    <location>
        <begin position="1459"/>
        <end position="1478"/>
    </location>
</feature>
<feature type="region of interest" description="Disordered" evidence="3">
    <location>
        <begin position="1611"/>
        <end position="1732"/>
    </location>
</feature>
<feature type="coiled-coil region" evidence="2">
    <location>
        <begin position="1241"/>
        <end position="1301"/>
    </location>
</feature>
<feature type="compositionally biased region" description="Low complexity" evidence="3">
    <location>
        <begin position="1459"/>
        <end position="1476"/>
    </location>
</feature>
<feature type="compositionally biased region" description="Polar residues" evidence="3">
    <location>
        <begin position="1635"/>
        <end position="1653"/>
    </location>
</feature>
<feature type="compositionally biased region" description="Polar residues" evidence="3">
    <location>
        <begin position="1690"/>
        <end position="1701"/>
    </location>
</feature>
<feature type="compositionally biased region" description="Polar residues" evidence="3">
    <location>
        <begin position="1720"/>
        <end position="1732"/>
    </location>
</feature>
<feature type="binding site" evidence="1">
    <location>
        <position position="796"/>
    </location>
    <ligand>
        <name>1,2-dioctanoyl-sn-glycero-3-phospho-(1D-myo-inositol-4,5-bisphosphate)</name>
        <dbReference type="ChEBI" id="CHEBI:83419"/>
    </ligand>
</feature>
<feature type="binding site" evidence="1">
    <location>
        <position position="1017"/>
    </location>
    <ligand>
        <name>1,2-dioctanoyl-sn-glycero-3-phospho-(1D-myo-inositol-4,5-bisphosphate)</name>
        <dbReference type="ChEBI" id="CHEBI:83419"/>
    </ligand>
</feature>
<feature type="binding site" evidence="1">
    <location>
        <position position="1018"/>
    </location>
    <ligand>
        <name>1,2-dioctanoyl-sn-glycero-3-phospho-(1D-myo-inositol-4,5-bisphosphate)</name>
        <dbReference type="ChEBI" id="CHEBI:83419"/>
    </ligand>
</feature>
<feature type="splice variant" id="VSP_043515" description="In isoform 12." evidence="24">
    <location>
        <begin position="1"/>
        <end position="153"/>
    </location>
</feature>
<feature type="splice variant" id="VSP_039107" description="In isoform 11." evidence="21">
    <original>MPEPWGTVYFLGIAQVFSFLFSWWNLEGVMNQADAPRPLNWTIRKLCHAAFLPSVRLLK</original>
    <variation>MGKKWRDAAEMERGCSDREDNAESRRRSRSASRGRFAESWKRLSSKQGSTKRSGLPSQQTP</variation>
    <location>
        <begin position="1"/>
        <end position="59"/>
    </location>
</feature>
<feature type="splice variant" id="VSP_012826" description="In isoform 2, isoform 3, isoform 4, isoform 5, isoform 6, isoform 8, isoform 10 and isoform 12." evidence="22 23 24 25">
    <location>
        <begin position="326"/>
        <end position="350"/>
    </location>
</feature>
<feature type="splice variant" id="VSP_043516" description="In isoform 12." evidence="24">
    <location>
        <begin position="409"/>
        <end position="1732"/>
    </location>
</feature>
<feature type="splice variant" id="VSP_012827" description="In isoform 8." evidence="25">
    <location>
        <begin position="535"/>
        <end position="552"/>
    </location>
</feature>
<feature type="splice variant" id="VSP_012828" description="In isoform 3 and isoform 5." evidence="23">
    <original>K</original>
    <variation>KREYPGFGWIYFK</variation>
    <location>
        <position position="569"/>
    </location>
</feature>
<feature type="splice variant" id="VSP_012829" description="In isoform 4, isoform 5, isoform 7 and isoform 8." evidence="23 25">
    <location>
        <begin position="617"/>
        <end position="626"/>
    </location>
</feature>
<feature type="splice variant" id="VSP_012830" description="In isoform 6." evidence="23">
    <original>P</original>
    <variation>RKQVYDSHTPKSA</variation>
    <location>
        <position position="1088"/>
    </location>
</feature>
<feature type="splice variant" id="VSP_012831" description="In isoform 10." evidence="22">
    <original>GEETMSP</original>
    <variation>EHPLYSV</variation>
    <location>
        <begin position="1344"/>
        <end position="1350"/>
    </location>
</feature>
<feature type="splice variant" id="VSP_012832" description="In isoform 10." evidence="22">
    <location>
        <begin position="1351"/>
        <end position="1732"/>
    </location>
</feature>
<feature type="sequence variant" id="VAR_088074" description="In CTRCT50." evidence="9">
    <original>I</original>
    <variation>M</variation>
    <location>
        <position position="65"/>
    </location>
</feature>
<feature type="sequence variant" id="VAR_088075" description="In NEDFSS; gain-of-function variant resulting in increased calcium ion transmembrane transport; basal channel activity is increased and the channel is more sensitive to stimulation by heat or the neurosteroid pregnenolone sulfate; the mutant channel can be down-regulated by the TRPM3 antagonist and anti-epileptic drug primidone." evidence="12 13 14 15 18 19">
    <original>V</original>
    <variation>M</variation>
    <location>
        <position position="1015"/>
    </location>
</feature>
<feature type="sequence variant" id="VAR_088076" description="In NEDFSS; gain-of-function variant resulting in increased calcium ion transmembrane transport; basal channel activity is increased and the channel is more sensitive to stimulation by heat or the neurosteroid pregnenolone sulfate; the mutant channel can be inhibited by the TRPM3 antagonist and anti-epileptic drug primidone." evidence="12 13 14">
    <original>P</original>
    <variation>Q</variation>
    <location>
        <position position="1115"/>
    </location>
</feature>
<feature type="sequence variant" id="VAR_088077" description="In NEDFSS; uncertain significance." evidence="17">
    <original>S</original>
    <variation>T</variation>
    <location>
        <position position="1380"/>
    </location>
</feature>
<feature type="sequence variant" id="VAR_057305" description="In dbSNP:rs13440436.">
    <original>T</original>
    <variation>I</variation>
    <location>
        <position position="1653"/>
    </location>
</feature>
<feature type="sequence variant" id="VAR_021257" description="In dbSNP:rs6560142.">
    <original>R</original>
    <variation>Q</variation>
    <location>
        <position position="1695"/>
    </location>
</feature>
<feature type="sequence variant" id="VAR_061862" description="In dbSNP:rs41287373." evidence="4">
    <original>R</original>
    <variation>K</variation>
    <location>
        <position position="1717"/>
    </location>
</feature>
<feature type="sequence variant" id="VAR_057306" description="In dbSNP:rs17535963." evidence="4 6 20">
    <original>N</original>
    <variation>T</variation>
    <location>
        <position position="1732"/>
    </location>
</feature>
<feature type="mutagenesis site" description="Enhances pH sensitivity." evidence="16">
    <original>D</original>
    <variation>Q</variation>
    <location>
        <position position="1084"/>
    </location>
</feature>
<feature type="mutagenesis site" description="Enhances pH sensitivity." evidence="16">
    <original>D</original>
    <variation>Q</variation>
    <location>
        <position position="1087"/>
    </location>
</feature>
<feature type="mutagenesis site" description="Less sensitivity toward protons." evidence="16">
    <original>D</original>
    <variation>Q</variation>
    <location>
        <position position="1098"/>
    </location>
</feature>
<feature type="sequence conflict" description="In Ref. 6; BAC55103." evidence="26" ref="6">
    <original>R</original>
    <variation>H</variation>
    <location>
        <position position="335"/>
    </location>
</feature>
<feature type="sequence conflict" description="In Ref. 6; BAC55106." evidence="26" ref="6">
    <original>C</original>
    <variation>Y</variation>
    <location>
        <position position="695"/>
    </location>
</feature>
<feature type="sequence conflict" description="In Ref. 6; BAC55106." evidence="26" ref="6">
    <original>D</original>
    <variation>E</variation>
    <location>
        <position position="1032"/>
    </location>
</feature>
<feature type="sequence conflict" description="In Ref. 6; BAC55104." evidence="26" ref="6">
    <original>K</original>
    <variation>Q</variation>
    <location>
        <position position="1730"/>
    </location>
</feature>
<reference key="1">
    <citation type="journal article" date="2003" name="J. Biol. Chem.">
        <title>Molecular and functional characterization of the melastatin-related cation channel TRPM3.</title>
        <authorList>
            <person name="Grimm C."/>
            <person name="Kraft R."/>
            <person name="Sauerbruch S."/>
            <person name="Schultz G."/>
            <person name="Harteneck C."/>
        </authorList>
    </citation>
    <scope>NUCLEOTIDE SEQUENCE [MRNA] (ISOFORMS 2 AND 10)</scope>
    <scope>FUNCTION</scope>
    <scope>TRANSPORTER ACTIVITY</scope>
    <scope>TISSUE SPECIFICITY</scope>
    <scope>ACTIVITY REGULATION</scope>
    <source>
        <tissue>Fetal brain</tissue>
    </source>
</reference>
<reference key="2">
    <citation type="journal article" date="2004" name="Nature">
        <title>DNA sequence and analysis of human chromosome 9.</title>
        <authorList>
            <person name="Humphray S.J."/>
            <person name="Oliver K."/>
            <person name="Hunt A.R."/>
            <person name="Plumb R.W."/>
            <person name="Loveland J.E."/>
            <person name="Howe K.L."/>
            <person name="Andrews T.D."/>
            <person name="Searle S."/>
            <person name="Hunt S.E."/>
            <person name="Scott C.E."/>
            <person name="Jones M.C."/>
            <person name="Ainscough R."/>
            <person name="Almeida J.P."/>
            <person name="Ambrose K.D."/>
            <person name="Ashwell R.I.S."/>
            <person name="Babbage A.K."/>
            <person name="Babbage S."/>
            <person name="Bagguley C.L."/>
            <person name="Bailey J."/>
            <person name="Banerjee R."/>
            <person name="Barker D.J."/>
            <person name="Barlow K.F."/>
            <person name="Bates K."/>
            <person name="Beasley H."/>
            <person name="Beasley O."/>
            <person name="Bird C.P."/>
            <person name="Bray-Allen S."/>
            <person name="Brown A.J."/>
            <person name="Brown J.Y."/>
            <person name="Burford D."/>
            <person name="Burrill W."/>
            <person name="Burton J."/>
            <person name="Carder C."/>
            <person name="Carter N.P."/>
            <person name="Chapman J.C."/>
            <person name="Chen Y."/>
            <person name="Clarke G."/>
            <person name="Clark S.Y."/>
            <person name="Clee C.M."/>
            <person name="Clegg S."/>
            <person name="Collier R.E."/>
            <person name="Corby N."/>
            <person name="Crosier M."/>
            <person name="Cummings A.T."/>
            <person name="Davies J."/>
            <person name="Dhami P."/>
            <person name="Dunn M."/>
            <person name="Dutta I."/>
            <person name="Dyer L.W."/>
            <person name="Earthrowl M.E."/>
            <person name="Faulkner L."/>
            <person name="Fleming C.J."/>
            <person name="Frankish A."/>
            <person name="Frankland J.A."/>
            <person name="French L."/>
            <person name="Fricker D.G."/>
            <person name="Garner P."/>
            <person name="Garnett J."/>
            <person name="Ghori J."/>
            <person name="Gilbert J.G.R."/>
            <person name="Glison C."/>
            <person name="Grafham D.V."/>
            <person name="Gribble S."/>
            <person name="Griffiths C."/>
            <person name="Griffiths-Jones S."/>
            <person name="Grocock R."/>
            <person name="Guy J."/>
            <person name="Hall R.E."/>
            <person name="Hammond S."/>
            <person name="Harley J.L."/>
            <person name="Harrison E.S.I."/>
            <person name="Hart E.A."/>
            <person name="Heath P.D."/>
            <person name="Henderson C.D."/>
            <person name="Hopkins B.L."/>
            <person name="Howard P.J."/>
            <person name="Howden P.J."/>
            <person name="Huckle E."/>
            <person name="Johnson C."/>
            <person name="Johnson D."/>
            <person name="Joy A.A."/>
            <person name="Kay M."/>
            <person name="Keenan S."/>
            <person name="Kershaw J.K."/>
            <person name="Kimberley A.M."/>
            <person name="King A."/>
            <person name="Knights A."/>
            <person name="Laird G.K."/>
            <person name="Langford C."/>
            <person name="Lawlor S."/>
            <person name="Leongamornlert D.A."/>
            <person name="Leversha M."/>
            <person name="Lloyd C."/>
            <person name="Lloyd D.M."/>
            <person name="Lovell J."/>
            <person name="Martin S."/>
            <person name="Mashreghi-Mohammadi M."/>
            <person name="Matthews L."/>
            <person name="McLaren S."/>
            <person name="McLay K.E."/>
            <person name="McMurray A."/>
            <person name="Milne S."/>
            <person name="Nickerson T."/>
            <person name="Nisbett J."/>
            <person name="Nordsiek G."/>
            <person name="Pearce A.V."/>
            <person name="Peck A.I."/>
            <person name="Porter K.M."/>
            <person name="Pandian R."/>
            <person name="Pelan S."/>
            <person name="Phillimore B."/>
            <person name="Povey S."/>
            <person name="Ramsey Y."/>
            <person name="Rand V."/>
            <person name="Scharfe M."/>
            <person name="Sehra H.K."/>
            <person name="Shownkeen R."/>
            <person name="Sims S.K."/>
            <person name="Skuce C.D."/>
            <person name="Smith M."/>
            <person name="Steward C.A."/>
            <person name="Swarbreck D."/>
            <person name="Sycamore N."/>
            <person name="Tester J."/>
            <person name="Thorpe A."/>
            <person name="Tracey A."/>
            <person name="Tromans A."/>
            <person name="Thomas D.W."/>
            <person name="Wall M."/>
            <person name="Wallis J.M."/>
            <person name="West A.P."/>
            <person name="Whitehead S.L."/>
            <person name="Willey D.L."/>
            <person name="Williams S.A."/>
            <person name="Wilming L."/>
            <person name="Wray P.W."/>
            <person name="Young L."/>
            <person name="Ashurst J.L."/>
            <person name="Coulson A."/>
            <person name="Blocker H."/>
            <person name="Durbin R.M."/>
            <person name="Sulston J.E."/>
            <person name="Hubbard T."/>
            <person name="Jackson M.J."/>
            <person name="Bentley D.R."/>
            <person name="Beck S."/>
            <person name="Rogers J."/>
            <person name="Dunham I."/>
        </authorList>
    </citation>
    <scope>NUCLEOTIDE SEQUENCE [LARGE SCALE GENOMIC DNA]</scope>
</reference>
<reference key="3">
    <citation type="journal article" date="2004" name="Genome Res.">
        <title>The status, quality, and expansion of the NIH full-length cDNA project: the Mammalian Gene Collection (MGC).</title>
        <authorList>
            <consortium name="The MGC Project Team"/>
        </authorList>
    </citation>
    <scope>NUCLEOTIDE SEQUENCE [LARGE SCALE MRNA] (ISOFORM 12)</scope>
</reference>
<reference key="4">
    <citation type="journal article" date="2001" name="Genome Res.">
        <title>Towards a catalog of human genes and proteins: sequencing and analysis of 500 novel complete protein coding human cDNAs.</title>
        <authorList>
            <person name="Wiemann S."/>
            <person name="Weil B."/>
            <person name="Wellenreuther R."/>
            <person name="Gassenhuber J."/>
            <person name="Glassl S."/>
            <person name="Ansorge W."/>
            <person name="Boecher M."/>
            <person name="Bloecker H."/>
            <person name="Bauersachs S."/>
            <person name="Blum H."/>
            <person name="Lauber J."/>
            <person name="Duesterhoeft A."/>
            <person name="Beyer A."/>
            <person name="Koehrer K."/>
            <person name="Strack N."/>
            <person name="Mewes H.-W."/>
            <person name="Ottenwaelder B."/>
            <person name="Obermaier B."/>
            <person name="Tampe J."/>
            <person name="Heubner D."/>
            <person name="Wambutt R."/>
            <person name="Korn B."/>
            <person name="Klein M."/>
            <person name="Poustka A."/>
        </authorList>
    </citation>
    <scope>NUCLEOTIDE SEQUENCE [LARGE SCALE MRNA] OF 1-324 (ISOFORM 11)</scope>
    <source>
        <tissue>Amygdala</tissue>
    </source>
</reference>
<reference key="5">
    <citation type="journal article" date="2003" name="J. Biol. Chem.">
        <title>Expression and characterization of human transient receptor potential melastatin 3 (hTRPM3).</title>
        <authorList>
            <person name="Lee N."/>
            <person name="Chen J."/>
            <person name="Sun L."/>
            <person name="Wu S."/>
            <person name="Gray K.R."/>
            <person name="Rich A."/>
            <person name="Huang M."/>
            <person name="Lin J.-H."/>
            <person name="Feder J.N."/>
            <person name="Janovitz E.B."/>
            <person name="Levesque P.C."/>
            <person name="Blanar M.A."/>
        </authorList>
    </citation>
    <scope>NUCLEOTIDE SEQUENCE [MRNA] OF 154-1732 (ISOFORMS 1; 2; 3; 4; 5 AND 6)</scope>
    <scope>VARIANT THR-1732</scope>
    <scope>FUNCTION</scope>
    <scope>TRANSPORTER ACTIVITY</scope>
    <scope>SUBCELLULAR LOCATION</scope>
    <scope>TISSUE SPECIFICITY</scope>
</reference>
<reference key="6">
    <citation type="submission" date="2003-01" db="EMBL/GenBank/DDBJ databases">
        <title>ProX human full-length cDNA cloning project.</title>
        <authorList>
            <person name="Okabayashi K."/>
            <person name="Hirano K."/>
            <person name="Sano M."/>
            <person name="Murahashi Y."/>
            <person name="Miyauchi A."/>
            <person name="Gonoi T."/>
        </authorList>
    </citation>
    <scope>NUCLEOTIDE SEQUENCE [LARGE SCALE MRNA] OF 154-1732 (ISOFORMS 1; 2; 4; 7 AND 8)</scope>
    <scope>VARIANT THR-1732</scope>
    <source>
        <tissue>Brain</tissue>
    </source>
</reference>
<reference key="7">
    <citation type="journal article" date="2000" name="DNA Res.">
        <title>Prediction of the coding sequences of unidentified human genes. XVIII. The complete sequences of 100 new cDNA clones from brain which code for large proteins in vitro.</title>
        <authorList>
            <person name="Nagase T."/>
            <person name="Kikuno R."/>
            <person name="Nakayama M."/>
            <person name="Hirosawa M."/>
            <person name="Ohara O."/>
        </authorList>
    </citation>
    <scope>NUCLEOTIDE SEQUENCE [LARGE SCALE MRNA] OF 716-1732 (ISOFORMS 1/2/3/4/5/7/8)</scope>
    <scope>VARIANTS LYS-1717 AND THR-1732</scope>
    <source>
        <tissue>Brain</tissue>
    </source>
</reference>
<reference key="8">
    <citation type="journal article" date="2011" name="J. Biol. Chem.">
        <title>Transient receptor potential melastatin 1 (TRPM1) is an ion-conducting plasma membrane channel inhibited by zinc ions.</title>
        <authorList>
            <person name="Lambert S."/>
            <person name="Drews A."/>
            <person name="Rizun O."/>
            <person name="Wagner T.F."/>
            <person name="Lis A."/>
            <person name="Mannebach S."/>
            <person name="Plant S."/>
            <person name="Portz M."/>
            <person name="Meissner M."/>
            <person name="Philipp S.E."/>
            <person name="Oberwinkler J."/>
        </authorList>
    </citation>
    <scope>FUNCTION</scope>
    <scope>IDENTIFICATION IN COMPLEX WITH TRPM1</scope>
    <scope>SUBCELLULAR LOCATION</scope>
</reference>
<reference key="9">
    <citation type="journal article" date="2014" name="PLoS ONE">
        <title>Mutation of the melastatin-related cation channel, TRPM3, underlies inherited cataract and glaucoma.</title>
        <authorList>
            <person name="Bennett T.M."/>
            <person name="Mackay D.S."/>
            <person name="Siegfried C.J."/>
            <person name="Shiels A."/>
        </authorList>
    </citation>
    <scope>VARIANT CTRCT50 MET-65</scope>
    <scope>INVOLVEMENT IN CTRCT50</scope>
</reference>
<reference key="10">
    <citation type="journal article" date="2019" name="Eur. J. Hum. Genet.">
        <title>De novo substitutions of TRPM3 cause intellectual disability and epilepsy.</title>
        <authorList>
            <person name="Dyment D.A."/>
            <person name="Terhal P.A."/>
            <person name="Rustad C.F."/>
            <person name="Tveten K."/>
            <person name="Griffith C."/>
            <person name="Jayakar P."/>
            <person name="Shinawi M."/>
            <person name="Ellingwood S."/>
            <person name="Smith R."/>
            <person name="van Gassen K."/>
            <person name="McWalter K."/>
            <person name="Innes A.M."/>
            <person name="Lines M.A."/>
        </authorList>
    </citation>
    <scope>VARIANTS NEDFSS MET-1015 AND GLN-1115</scope>
    <scope>INVOLVEMENT IN NEDFSS</scope>
</reference>
<reference key="11">
    <citation type="journal article" date="2020" name="Elife">
        <title>Gain of channel function and modified gating properties in TRPM3 mutants causing intellectual disability and epilepsy.</title>
        <authorList>
            <person name="Van Hoeymissen E."/>
            <person name="Held K."/>
            <person name="Nogueira Freitas A.C."/>
            <person name="Janssens A."/>
            <person name="Voets T."/>
            <person name="Vriens J."/>
        </authorList>
    </citation>
    <scope>CHARACTERIZATION OF VARIANTS NEDFSS MET-1015 AND GLN-1115</scope>
</reference>
<reference key="12">
    <citation type="journal article" date="2020" name="Elife">
        <title>Disease-associated mutations in the human TRPM3 render the channel overactive via two distinct mechanisms.</title>
        <authorList>
            <person name="Zhao S."/>
            <person name="Yudin Y."/>
            <person name="Rohacs T."/>
        </authorList>
    </citation>
    <scope>FUNCTION</scope>
    <scope>TRANSPORTER ACTIVITY</scope>
    <scope>ACTIVITY REGULATION</scope>
    <scope>CHARACTERIZATION OF VARIANTS NEDFSS MET-1015 AND GLN-1115</scope>
</reference>
<reference key="13">
    <citation type="journal article" date="2021" name="Front. Pharmacol.">
        <title>The Underlying Mechanism of Modulation of Transient Receptor Potential Melastatin 3 by protons.</title>
        <authorList>
            <person name="Hossain Saad M.Z."/>
            <person name="Xiang L."/>
            <person name="Liao Y.S."/>
            <person name="Reznikov L.R."/>
            <person name="Du J."/>
        </authorList>
    </citation>
    <scope>ACTIVITY REGULATION</scope>
    <scope>MUTAGENESIS OF ASP-1084; ASP-1087 AND ASP-1098</scope>
</reference>
<reference key="14">
    <citation type="journal article" date="2020" name="Eur. J. Med. Genet.">
        <title>Confirmation and Expansion of the Phenotype Associated with the Recurrent p.Val837Met Variant in TRPM3.</title>
        <authorList>
            <person name="de Sainte Agathe J.M."/>
            <person name="Van-Gils J."/>
            <person name="Lasseaux E."/>
            <person name="Arveiler B."/>
            <person name="Lacombe D."/>
            <person name="Pfirrmann C."/>
            <person name="Raclet V."/>
            <person name="Gaston L."/>
            <person name="Plaisant C."/>
            <person name="Aupy J."/>
            <person name="Trimouille A."/>
        </authorList>
    </citation>
    <scope>VARIANT NEDFSS MET-1015</scope>
</reference>
<reference key="15">
    <citation type="journal article" date="2021" name="BMC Pediatr.">
        <title>A Chinese patient with developmental and epileptic encephalopathies (DEE) carrying a TRPM3 gene mutation: a paediatric case report.</title>
        <authorList>
            <person name="Kang Q."/>
            <person name="Yang L."/>
            <person name="Liao H."/>
            <person name="Yang S."/>
            <person name="Kuang X."/>
            <person name="Ning Z."/>
            <person name="Liao C."/>
            <person name="Chen B."/>
        </authorList>
    </citation>
    <scope>VARIANT NEDFSS THR-1380</scope>
</reference>
<reference key="16">
    <citation type="journal article" date="2021" name="Eur. J. Med. Genet.">
        <title>Description of a novel patient with the TRPM3 recurrent p.Val837Met variant.</title>
        <authorList>
            <person name="Gauthier L.W."/>
            <person name="Chatron N."/>
            <person name="Cabet S."/>
            <person name="Labalme A."/>
            <person name="Carneiro M."/>
            <person name="Poirot I."/>
            <person name="Delvert C."/>
            <person name="Gleizal A."/>
            <person name="Lesca G."/>
            <person name="Putoux A."/>
        </authorList>
    </citation>
    <scope>VARIANT NEDFSS MET-1015</scope>
</reference>
<reference key="17">
    <citation type="journal article" date="2022" name="Am. J. Med. Genet. A">
        <title>Phenotypic spectrum of the recurrent TRPM3 p.(Val837Met) substitution in seven individuals with global developmental delay and hypotonia.</title>
        <authorList>
            <consortium name="TUDP Study Group"/>
            <person name="Lines M.A."/>
            <person name="Goldenberg P."/>
            <person name="Wong A."/>
            <person name="Srivastava S."/>
            <person name="Bayat A."/>
            <person name="Hove H."/>
            <person name="Karstensen H.G."/>
            <person name="Anyane-Yeboa K."/>
            <person name="Liao J."/>
            <person name="Jiang N."/>
            <person name="May A."/>
            <person name="Guzman E."/>
            <person name="Morleo M."/>
            <person name="D'Arrigo S."/>
            <person name="Ciaccio C."/>
            <person name="Pantaleoni C."/>
            <person name="Castello R."/>
            <person name="McKee S."/>
            <person name="Ong J."/>
            <person name="Zibdeh-Lough H."/>
            <person name="Tran-Mau-Them F."/>
            <person name="Gerasimenko A."/>
            <person name="Heron D."/>
            <person name="Keren B."/>
            <person name="Margot H."/>
            <person name="de Sainte Agathe J.M."/>
            <person name="Burglen L."/>
            <person name="Voets T."/>
            <person name="Vriens J."/>
            <person name="Innes A.M."/>
            <person name="Dyment D.A."/>
        </authorList>
    </citation>
    <scope>VARIANT NEDFSS MET-1015</scope>
</reference>
<reference key="18">
    <citation type="journal article" date="2014" name="Br. J. Pharmacol.">
        <title>Structural requirements of steroidal agonists of transient receptor potential melastatin 3 (TRPM3) cation channels.</title>
        <authorList>
            <person name="Drews A."/>
            <person name="Mohr F."/>
            <person name="Rizun O."/>
            <person name="Wagner T.F."/>
            <person name="Dembla S."/>
            <person name="Rudolph S."/>
            <person name="Lambert S."/>
            <person name="Konrad M."/>
            <person name="Philipp S.E."/>
            <person name="Behrendt M."/>
            <person name="Marchais-Oberwinkler S."/>
            <person name="Covey D.F."/>
            <person name="Oberwinkler J."/>
        </authorList>
    </citation>
    <scope>ACTIVITY REGULATION</scope>
</reference>
<reference key="19">
    <citation type="journal article" date="2015" name="J. Gen. Physiol.">
        <title>Transient receptor potential melastatin 3 is a phosphoinositide-dependent ion channel.</title>
        <authorList>
            <person name="Badheka D."/>
            <person name="Borbiro I."/>
            <person name="Rohacs T."/>
        </authorList>
    </citation>
    <scope>ACTIVITY REGULATION</scope>
</reference>
<reference key="20">
    <citation type="journal article" date="2017" name="Elife">
        <title>Inhibition of Transient Receptor Potential Melastatin 3 ion channels by G-protein betagamma subunits.</title>
        <authorList>
            <person name="Badheka D."/>
            <person name="Yudin Y."/>
            <person name="Borbiro I."/>
            <person name="Hartle C.M."/>
            <person name="Yazici A."/>
            <person name="Mirshahi T."/>
            <person name="Rohacs T."/>
        </authorList>
    </citation>
    <scope>ACTIVITY REGULATION</scope>
</reference>
<organism>
    <name type="scientific">Homo sapiens</name>
    <name type="common">Human</name>
    <dbReference type="NCBI Taxonomy" id="9606"/>
    <lineage>
        <taxon>Eukaryota</taxon>
        <taxon>Metazoa</taxon>
        <taxon>Chordata</taxon>
        <taxon>Craniata</taxon>
        <taxon>Vertebrata</taxon>
        <taxon>Euteleostomi</taxon>
        <taxon>Mammalia</taxon>
        <taxon>Eutheria</taxon>
        <taxon>Euarchontoglires</taxon>
        <taxon>Primates</taxon>
        <taxon>Haplorrhini</taxon>
        <taxon>Catarrhini</taxon>
        <taxon>Hominidae</taxon>
        <taxon>Homo</taxon>
    </lineage>
</organism>
<comment type="function">
    <text evidence="1 5 6 7 13">Constitutively active, non-selective divalent cation-conducting channel that is permeable to Ca(2+), Mn(2+), and Mg(2+), with a high permeability for Ca(2+). However, can be enhanced by increasing temperature and by ligands, including the endogenous neurosteroid pregnenolone sulfate and sphingosine-1 and suppressed by intracellular Mg(2+) (PubMed:12672799, PubMed:12672827, PubMed:32343227). Implicated in a variety of cellular processes, including insulin/peptide secretion, vascular constriction and dilation, noxious heat sensing, inflammatory and spontaneous pain sensitivity. In neurons of the dorsal root ganglia, functions as thermosensitive channel for the detection of noxious heat and spontaneous pain. Suggested to function as an ionotropic steroid receptor in beta-cell, indeed pregnenolone sulfate leads to Ca(2+) influx and enhanced insulin secretion. Mediates Zn(2+) uptake into the lumen of pancreatic beta cell secretory granules, thereby regulating insulin secretion (By similarity). Forms heteromultimeric ion channels with TRPM1 which are permeable for Ca(2+) and Zn(2+) ions (PubMed:21278253). Exists as multiple splice variants which differ significantly in their biophysical properties (By similarity).</text>
</comment>
<comment type="catalytic activity">
    <reaction evidence="5 6 13 14">
        <text>Ca(2+)(in) = Ca(2+)(out)</text>
        <dbReference type="Rhea" id="RHEA:29671"/>
        <dbReference type="ChEBI" id="CHEBI:29108"/>
    </reaction>
</comment>
<comment type="catalytic activity">
    <reaction evidence="5">
        <text>Mn(2+)(in) = Mn(2+)(out)</text>
        <dbReference type="Rhea" id="RHEA:28699"/>
        <dbReference type="ChEBI" id="CHEBI:29035"/>
    </reaction>
</comment>
<comment type="catalytic activity">
    <reaction evidence="1">
        <text>Zn(2+)(in) = Zn(2+)(out)</text>
        <dbReference type="Rhea" id="RHEA:29351"/>
        <dbReference type="ChEBI" id="CHEBI:29105"/>
    </reaction>
</comment>
<comment type="catalytic activity">
    <reaction evidence="1">
        <text>Mg(2+)(in) = Mg(2+)(out)</text>
        <dbReference type="Rhea" id="RHEA:29827"/>
        <dbReference type="ChEBI" id="CHEBI:18420"/>
    </reaction>
</comment>
<comment type="activity regulation">
    <text evidence="1 5 8 10 11 13 16">Activated by the neurosteroid pregnelonone sulfate (PregS); PregS activates the channel by shifting its current-voltage activation curve toward more negative membrane potentials and also potentiates temperature-induced activation (PubMed:24251620, PubMed:32343227). Activated by sphingosine (PubMed:12672799). Activated by heat (PubMed:12672799, PubMed:32343227). Intracellular Ca(2+) inhibits TRPM3 probably via interaction with Ca(2+)/calmodulin (By similarity). Intracellular Mg(2+) inhibits TRPM3 activity (By similarity). Both intracellular and extracellular protons block TRPM3 through propable binding sites in the pore region (PubMed:33603674). Positively regulated by phosphoinositide phosphoinositol 4,5-biphosphate (PI(4,5)P2) (PubMed:26123195). Strongly inhibited by activation of G(i)-coupled receptors via direct binding with G-betagamma-subunits of heterotrimeric G-proteins (PubMed:28829742).</text>
</comment>
<comment type="subunit">
    <text evidence="1 7">Homotetramer (By similarity). Interacts with TRPM1; the interaction results in the formation of a heteromultimeric cation channel complex that are functionally different from the homomeric channels (PubMed:21278253).</text>
</comment>
<comment type="subcellular location">
    <subcellularLocation>
        <location evidence="6 27">Cell membrane</location>
        <topology evidence="1">Multi-pass membrane protein</topology>
    </subcellularLocation>
</comment>
<comment type="alternative products">
    <event type="alternative splicing"/>
    <isoform>
        <id>Q9HCF6-1</id>
        <name>1</name>
        <name>TRPM3f</name>
        <sequence type="displayed"/>
    </isoform>
    <isoform>
        <id>Q9HCF6-2</id>
        <name>2</name>
        <name evidence="23">TRPM3a</name>
        <sequence type="described" ref="VSP_012826"/>
    </isoform>
    <isoform>
        <id>Q9HCF6-3</id>
        <name>3</name>
        <name evidence="23">TRPM3b</name>
        <sequence type="described" ref="VSP_012826 VSP_012828"/>
    </isoform>
    <isoform>
        <id>Q9HCF6-4</id>
        <name>4</name>
        <name evidence="23">TRPM3d</name>
        <sequence type="described" ref="VSP_012826 VSP_012829"/>
    </isoform>
    <isoform>
        <id>Q9HCF6-5</id>
        <name>5</name>
        <name evidence="23">TRPM3e</name>
        <sequence type="described" ref="VSP_012826 VSP_012828 VSP_012829"/>
    </isoform>
    <isoform>
        <id>Q9HCF6-6</id>
        <name>6</name>
        <name evidence="23">TRPM3c</name>
        <sequence type="described" ref="VSP_012826 VSP_012830"/>
    </isoform>
    <isoform>
        <id>Q9HCF6-7</id>
        <name>7</name>
        <sequence type="described" ref="VSP_012829"/>
    </isoform>
    <isoform>
        <id>Q9HCF6-8</id>
        <name>8</name>
        <sequence type="described" ref="VSP_012826 VSP_012827 VSP_012829"/>
    </isoform>
    <isoform>
        <id>Q9HCF6-10</id>
        <name>10</name>
        <sequence type="described" ref="VSP_012826 VSP_012831 VSP_012832"/>
    </isoform>
    <isoform>
        <id>Q9HCF6-11</id>
        <name>11</name>
        <sequence type="described" ref="VSP_039107"/>
    </isoform>
    <isoform>
        <id>Q9HCF6-12</id>
        <name>12</name>
        <sequence type="described" ref="VSP_043515 VSP_012826 VSP_043516"/>
    </isoform>
    <text evidence="1">A number of isoforms are produced with distinct channel characteristics.</text>
</comment>
<comment type="tissue specificity">
    <text evidence="5 6 9">Expressed primarily in the kidney and, at lower levels, in brain, testis, ovary, pancreas and spinal cord. Expression in the brain and kidney was determined at protein level. In the kidney, expressed predominantly in the collecting tubular epithelium in the medulla, medullary rays, and periglomerular regions; in the brain, highest levels are found in the cerebellum, choroid plexus, the locus coeruleus, the posterior thalamus and the substantia nigra. Down-regulated in renal tumors compared to normal kidney. Expressed in the lens (PubMed:25090642).</text>
</comment>
<comment type="disease" evidence="12 13 14 15 17 18 19">
    <disease id="DI-06597">
        <name>Neurodevelopmental disorder with hypotonia, dysmorphic facies, and skeletal anomalies, with or without seizures</name>
        <acronym>NEDFSS</acronym>
        <description>An autosomal dominant disorder characterized by global developmental delay, moderate to severely impaired intellectual development, poor or absent speech, congenital hypotonia, dysmorphic facial features, exotropia, and musculoskeletal issues such as hip dysplasia, hip dislocation and scoliosis. About half of patients develop various types of seizures.</description>
        <dbReference type="MIM" id="620224"/>
    </disease>
    <text>The disease is caused by variants affecting the gene represented in this entry.</text>
</comment>
<comment type="disease" evidence="9">
    <disease id="DI-06610">
        <name>Cataract 50 with or without glaucoma</name>
        <acronym>CTRCT50</acronym>
        <description>A form of cataract, an opacification of the crystalline lens of the eye that frequently results in visual impairment or blindness. Opacities vary in morphology, are often confined to a portion of the lens, and may be static or progressive. In general, the more posteriorly located and dense an opacity, the greater the impact on visual function. CTRCT50 is an autosomal dominant form characterized by early onset. Affected individuals may also exhibit high-tension glaucoma and variable anterior segment defects.</description>
        <dbReference type="MIM" id="620253"/>
    </disease>
    <text>The disease is caused by variants affecting the gene represented in this entry.</text>
</comment>
<comment type="similarity">
    <text evidence="26">Belongs to the transient receptor (TC 1.A.4) family. LTrpC subfamily. TRPM3 sub-subfamily.</text>
</comment>
<comment type="sequence caution" evidence="26">
    <conflict type="miscellaneous discrepancy">
        <sequence resource="EMBL-CDS" id="CAB66480"/>
    </conflict>
    <text>Cloning artifact in C-terminus.</text>
</comment>
<gene>
    <name evidence="28" type="primary">TRPM3</name>
    <name type="synonym">KIAA1616</name>
    <name type="synonym">LTRPC3</name>
</gene>
<name>TRPM3_HUMAN</name>